<reference key="1">
    <citation type="journal article" date="2007" name="Proc. Natl. Acad. Sci. U.S.A.">
        <title>Genome and proteome of long-chain alkane degrading Geobacillus thermodenitrificans NG80-2 isolated from a deep-subsurface oil reservoir.</title>
        <authorList>
            <person name="Feng L."/>
            <person name="Wang W."/>
            <person name="Cheng J."/>
            <person name="Ren Y."/>
            <person name="Zhao G."/>
            <person name="Gao C."/>
            <person name="Tang Y."/>
            <person name="Liu X."/>
            <person name="Han W."/>
            <person name="Peng X."/>
            <person name="Liu R."/>
            <person name="Wang L."/>
        </authorList>
    </citation>
    <scope>NUCLEOTIDE SEQUENCE [LARGE SCALE GENOMIC DNA]</scope>
    <source>
        <strain>NG80-2</strain>
    </source>
</reference>
<sequence>MIVTTTNTVEGKEIEAYLGIVAAEVILGANVVRDFLASITDIIGGRSGTYESKLAEGRELAIREMVNKATKLGANAVIGVDLDFETLRDGMMMCIATGTAVKVK</sequence>
<proteinExistence type="inferred from homology"/>
<dbReference type="EMBL" id="CP000557">
    <property type="protein sequence ID" value="ABO66635.1"/>
    <property type="molecule type" value="Genomic_DNA"/>
</dbReference>
<dbReference type="RefSeq" id="WP_008879456.1">
    <property type="nucleotide sequence ID" value="NC_009328.1"/>
</dbReference>
<dbReference type="SMR" id="A4IMT1"/>
<dbReference type="KEGG" id="gtn:GTNG_1265"/>
<dbReference type="eggNOG" id="COG0393">
    <property type="taxonomic scope" value="Bacteria"/>
</dbReference>
<dbReference type="HOGENOM" id="CLU_117144_3_2_9"/>
<dbReference type="Proteomes" id="UP000001578">
    <property type="component" value="Chromosome"/>
</dbReference>
<dbReference type="Gene3D" id="3.30.110.70">
    <property type="entry name" value="Hypothetical protein apc22750. Chain B"/>
    <property type="match status" value="1"/>
</dbReference>
<dbReference type="HAMAP" id="MF_00338">
    <property type="entry name" value="UPF0145"/>
    <property type="match status" value="1"/>
</dbReference>
<dbReference type="InterPro" id="IPR035439">
    <property type="entry name" value="UPF0145_dom_sf"/>
</dbReference>
<dbReference type="InterPro" id="IPR002765">
    <property type="entry name" value="UPF0145_YbjQ-like"/>
</dbReference>
<dbReference type="PANTHER" id="PTHR34068">
    <property type="entry name" value="UPF0145 PROTEIN YBJQ"/>
    <property type="match status" value="1"/>
</dbReference>
<dbReference type="PANTHER" id="PTHR34068:SF1">
    <property type="entry name" value="UPF0145 PROTEIN YBJQ"/>
    <property type="match status" value="1"/>
</dbReference>
<dbReference type="Pfam" id="PF01906">
    <property type="entry name" value="YbjQ_1"/>
    <property type="match status" value="1"/>
</dbReference>
<dbReference type="SUPFAM" id="SSF117782">
    <property type="entry name" value="YbjQ-like"/>
    <property type="match status" value="1"/>
</dbReference>
<feature type="chain" id="PRO_1000013003" description="UPF0145 protein GTNG_1265">
    <location>
        <begin position="1"/>
        <end position="104"/>
    </location>
</feature>
<accession>A4IMT1</accession>
<protein>
    <recommendedName>
        <fullName evidence="1">UPF0145 protein GTNG_1265</fullName>
    </recommendedName>
</protein>
<organism>
    <name type="scientific">Geobacillus thermodenitrificans (strain NG80-2)</name>
    <dbReference type="NCBI Taxonomy" id="420246"/>
    <lineage>
        <taxon>Bacteria</taxon>
        <taxon>Bacillati</taxon>
        <taxon>Bacillota</taxon>
        <taxon>Bacilli</taxon>
        <taxon>Bacillales</taxon>
        <taxon>Anoxybacillaceae</taxon>
        <taxon>Geobacillus</taxon>
    </lineage>
</organism>
<evidence type="ECO:0000255" key="1">
    <source>
        <dbReference type="HAMAP-Rule" id="MF_00338"/>
    </source>
</evidence>
<name>Y1265_GEOTN</name>
<gene>
    <name type="ordered locus">GTNG_1265</name>
</gene>
<comment type="similarity">
    <text evidence="1">Belongs to the UPF0145 family.</text>
</comment>